<dbReference type="EC" id="3.7.1.3" evidence="1"/>
<dbReference type="EMBL" id="CP000360">
    <property type="protein sequence ID" value="ABF39685.1"/>
    <property type="molecule type" value="Genomic_DNA"/>
</dbReference>
<dbReference type="RefSeq" id="WP_011521487.1">
    <property type="nucleotide sequence ID" value="NC_008009.1"/>
</dbReference>
<dbReference type="SMR" id="Q1ITW5"/>
<dbReference type="STRING" id="204669.Acid345_0680"/>
<dbReference type="EnsemblBacteria" id="ABF39685">
    <property type="protein sequence ID" value="ABF39685"/>
    <property type="gene ID" value="Acid345_0680"/>
</dbReference>
<dbReference type="KEGG" id="aba:Acid345_0680"/>
<dbReference type="eggNOG" id="COG3844">
    <property type="taxonomic scope" value="Bacteria"/>
</dbReference>
<dbReference type="HOGENOM" id="CLU_003433_4_0_0"/>
<dbReference type="UniPathway" id="UPA00253">
    <property type="reaction ID" value="UER00329"/>
</dbReference>
<dbReference type="UniPathway" id="UPA00334">
    <property type="reaction ID" value="UER00455"/>
</dbReference>
<dbReference type="Proteomes" id="UP000002432">
    <property type="component" value="Chromosome"/>
</dbReference>
<dbReference type="GO" id="GO:0005737">
    <property type="term" value="C:cytoplasm"/>
    <property type="evidence" value="ECO:0007669"/>
    <property type="project" value="InterPro"/>
</dbReference>
<dbReference type="GO" id="GO:0030429">
    <property type="term" value="F:kynureninase activity"/>
    <property type="evidence" value="ECO:0007669"/>
    <property type="project" value="UniProtKB-UniRule"/>
</dbReference>
<dbReference type="GO" id="GO:0030170">
    <property type="term" value="F:pyridoxal phosphate binding"/>
    <property type="evidence" value="ECO:0007669"/>
    <property type="project" value="UniProtKB-UniRule"/>
</dbReference>
<dbReference type="GO" id="GO:0043420">
    <property type="term" value="P:anthranilate metabolic process"/>
    <property type="evidence" value="ECO:0007669"/>
    <property type="project" value="TreeGrafter"/>
</dbReference>
<dbReference type="GO" id="GO:0097053">
    <property type="term" value="P:L-kynurenine catabolic process"/>
    <property type="evidence" value="ECO:0007669"/>
    <property type="project" value="UniProtKB-UniRule"/>
</dbReference>
<dbReference type="GO" id="GO:0019441">
    <property type="term" value="P:L-tryptophan catabolic process to kynurenine"/>
    <property type="evidence" value="ECO:0007669"/>
    <property type="project" value="TreeGrafter"/>
</dbReference>
<dbReference type="GO" id="GO:0009435">
    <property type="term" value="P:NAD biosynthetic process"/>
    <property type="evidence" value="ECO:0007669"/>
    <property type="project" value="UniProtKB-UniPathway"/>
</dbReference>
<dbReference type="GO" id="GO:0019805">
    <property type="term" value="P:quinolinate biosynthetic process"/>
    <property type="evidence" value="ECO:0007669"/>
    <property type="project" value="UniProtKB-UniRule"/>
</dbReference>
<dbReference type="FunFam" id="3.40.640.10:FF:000031">
    <property type="entry name" value="Kynureninase"/>
    <property type="match status" value="1"/>
</dbReference>
<dbReference type="Gene3D" id="3.90.1150.10">
    <property type="entry name" value="Aspartate Aminotransferase, domain 1"/>
    <property type="match status" value="1"/>
</dbReference>
<dbReference type="Gene3D" id="3.40.640.10">
    <property type="entry name" value="Type I PLP-dependent aspartate aminotransferase-like (Major domain)"/>
    <property type="match status" value="1"/>
</dbReference>
<dbReference type="HAMAP" id="MF_01970">
    <property type="entry name" value="Kynureninase"/>
    <property type="match status" value="1"/>
</dbReference>
<dbReference type="InterPro" id="IPR010111">
    <property type="entry name" value="Kynureninase"/>
</dbReference>
<dbReference type="InterPro" id="IPR015424">
    <property type="entry name" value="PyrdxlP-dep_Trfase"/>
</dbReference>
<dbReference type="InterPro" id="IPR015421">
    <property type="entry name" value="PyrdxlP-dep_Trfase_major"/>
</dbReference>
<dbReference type="InterPro" id="IPR015422">
    <property type="entry name" value="PyrdxlP-dep_Trfase_small"/>
</dbReference>
<dbReference type="NCBIfam" id="TIGR01814">
    <property type="entry name" value="kynureninase"/>
    <property type="match status" value="1"/>
</dbReference>
<dbReference type="PANTHER" id="PTHR14084">
    <property type="entry name" value="KYNURENINASE"/>
    <property type="match status" value="1"/>
</dbReference>
<dbReference type="PANTHER" id="PTHR14084:SF0">
    <property type="entry name" value="KYNURENINASE"/>
    <property type="match status" value="1"/>
</dbReference>
<dbReference type="Pfam" id="PF22580">
    <property type="entry name" value="KYNU_C"/>
    <property type="match status" value="1"/>
</dbReference>
<dbReference type="PIRSF" id="PIRSF038800">
    <property type="entry name" value="KYNU"/>
    <property type="match status" value="1"/>
</dbReference>
<dbReference type="SUPFAM" id="SSF53383">
    <property type="entry name" value="PLP-dependent transferases"/>
    <property type="match status" value="1"/>
</dbReference>
<gene>
    <name evidence="1" type="primary">kynU</name>
    <name type="ordered locus">Acid345_0680</name>
</gene>
<evidence type="ECO:0000255" key="1">
    <source>
        <dbReference type="HAMAP-Rule" id="MF_01970"/>
    </source>
</evidence>
<reference key="1">
    <citation type="journal article" date="2009" name="Appl. Environ. Microbiol.">
        <title>Three genomes from the phylum Acidobacteria provide insight into the lifestyles of these microorganisms in soils.</title>
        <authorList>
            <person name="Ward N.L."/>
            <person name="Challacombe J.F."/>
            <person name="Janssen P.H."/>
            <person name="Henrissat B."/>
            <person name="Coutinho P.M."/>
            <person name="Wu M."/>
            <person name="Xie G."/>
            <person name="Haft D.H."/>
            <person name="Sait M."/>
            <person name="Badger J."/>
            <person name="Barabote R.D."/>
            <person name="Bradley B."/>
            <person name="Brettin T.S."/>
            <person name="Brinkac L.M."/>
            <person name="Bruce D."/>
            <person name="Creasy T."/>
            <person name="Daugherty S.C."/>
            <person name="Davidsen T.M."/>
            <person name="DeBoy R.T."/>
            <person name="Detter J.C."/>
            <person name="Dodson R.J."/>
            <person name="Durkin A.S."/>
            <person name="Ganapathy A."/>
            <person name="Gwinn-Giglio M."/>
            <person name="Han C.S."/>
            <person name="Khouri H."/>
            <person name="Kiss H."/>
            <person name="Kothari S.P."/>
            <person name="Madupu R."/>
            <person name="Nelson K.E."/>
            <person name="Nelson W.C."/>
            <person name="Paulsen I."/>
            <person name="Penn K."/>
            <person name="Ren Q."/>
            <person name="Rosovitz M.J."/>
            <person name="Selengut J.D."/>
            <person name="Shrivastava S."/>
            <person name="Sullivan S.A."/>
            <person name="Tapia R."/>
            <person name="Thompson L.S."/>
            <person name="Watkins K.L."/>
            <person name="Yang Q."/>
            <person name="Yu C."/>
            <person name="Zafar N."/>
            <person name="Zhou L."/>
            <person name="Kuske C.R."/>
        </authorList>
    </citation>
    <scope>NUCLEOTIDE SEQUENCE [LARGE SCALE GENOMIC DNA]</scope>
    <source>
        <strain>Ellin345</strain>
    </source>
</reference>
<feature type="chain" id="PRO_0000356985" description="Kynureninase">
    <location>
        <begin position="1"/>
        <end position="424"/>
    </location>
</feature>
<feature type="binding site" evidence="1">
    <location>
        <position position="109"/>
    </location>
    <ligand>
        <name>pyridoxal 5'-phosphate</name>
        <dbReference type="ChEBI" id="CHEBI:597326"/>
    </ligand>
</feature>
<feature type="binding site" evidence="1">
    <location>
        <position position="110"/>
    </location>
    <ligand>
        <name>pyridoxal 5'-phosphate</name>
        <dbReference type="ChEBI" id="CHEBI:597326"/>
    </ligand>
</feature>
<feature type="binding site" evidence="1">
    <location>
        <begin position="137"/>
        <end position="140"/>
    </location>
    <ligand>
        <name>pyridoxal 5'-phosphate</name>
        <dbReference type="ChEBI" id="CHEBI:597326"/>
    </ligand>
</feature>
<feature type="binding site" evidence="1">
    <location>
        <position position="222"/>
    </location>
    <ligand>
        <name>pyridoxal 5'-phosphate</name>
        <dbReference type="ChEBI" id="CHEBI:597326"/>
    </ligand>
</feature>
<feature type="binding site" evidence="1">
    <location>
        <position position="225"/>
    </location>
    <ligand>
        <name>pyridoxal 5'-phosphate</name>
        <dbReference type="ChEBI" id="CHEBI:597326"/>
    </ligand>
</feature>
<feature type="binding site" evidence="1">
    <location>
        <position position="247"/>
    </location>
    <ligand>
        <name>pyridoxal 5'-phosphate</name>
        <dbReference type="ChEBI" id="CHEBI:597326"/>
    </ligand>
</feature>
<feature type="binding site" evidence="1">
    <location>
        <position position="278"/>
    </location>
    <ligand>
        <name>pyridoxal 5'-phosphate</name>
        <dbReference type="ChEBI" id="CHEBI:597326"/>
    </ligand>
</feature>
<feature type="binding site" evidence="1">
    <location>
        <position position="306"/>
    </location>
    <ligand>
        <name>pyridoxal 5'-phosphate</name>
        <dbReference type="ChEBI" id="CHEBI:597326"/>
    </ligand>
</feature>
<feature type="modified residue" description="N6-(pyridoxal phosphate)lysine" evidence="1">
    <location>
        <position position="248"/>
    </location>
</feature>
<organism>
    <name type="scientific">Koribacter versatilis (strain Ellin345)</name>
    <dbReference type="NCBI Taxonomy" id="204669"/>
    <lineage>
        <taxon>Bacteria</taxon>
        <taxon>Pseudomonadati</taxon>
        <taxon>Acidobacteriota</taxon>
        <taxon>Terriglobia</taxon>
        <taxon>Terriglobales</taxon>
        <taxon>Candidatus Korobacteraceae</taxon>
        <taxon>Candidatus Korobacter</taxon>
    </lineage>
</organism>
<accession>Q1ITW5</accession>
<sequence>MAAAAFDTTENFAIEMDARDPMSRFRGRFHIPPAPDGSASVYLVGHSLGLQPKTVRAYLEQELKDWETLGVEGHFRGKHPWMPYHRLLTEQTARLVCAQPSEVVVMNSLTVNLHLMMVSFYRPTRERHNILIEGSAFPSDQYAVQSQIKFHGFDPASSLLELCPRVGEATMRDEDILELIEREGQSIALILLGGVNYATGQAFDMAEITKAGHAQGCVVAFDCAHAAGNLELKLHEWDVDWAAWCSYKYLNGGPGCIGGCFVHERYARDFELPRFAGWWGHDQETRFKMGPEFHPMAGAEGWQLSNPSILTMAALRASMEIFDEAGIGKLRQRSIALTGYLEFLLDQQKSARFEIITPREPERRGAQLSIRVAAGNRSVCDRLVEEGALCDWREPDILRVAPVPLYCSYRDCYRFVQRFVANLN</sequence>
<keyword id="KW-0378">Hydrolase</keyword>
<keyword id="KW-0662">Pyridine nucleotide biosynthesis</keyword>
<keyword id="KW-0663">Pyridoxal phosphate</keyword>
<keyword id="KW-1185">Reference proteome</keyword>
<name>KYNU_KORVE</name>
<protein>
    <recommendedName>
        <fullName evidence="1">Kynureninase</fullName>
        <ecNumber evidence="1">3.7.1.3</ecNumber>
    </recommendedName>
    <alternativeName>
        <fullName evidence="1">L-kynurenine hydrolase</fullName>
    </alternativeName>
</protein>
<proteinExistence type="inferred from homology"/>
<comment type="function">
    <text evidence="1">Catalyzes the cleavage of L-kynurenine (L-Kyn) and L-3-hydroxykynurenine (L-3OHKyn) into anthranilic acid (AA) and 3-hydroxyanthranilic acid (3-OHAA), respectively.</text>
</comment>
<comment type="catalytic activity">
    <reaction evidence="1">
        <text>L-kynurenine + H2O = anthranilate + L-alanine + H(+)</text>
        <dbReference type="Rhea" id="RHEA:16813"/>
        <dbReference type="ChEBI" id="CHEBI:15377"/>
        <dbReference type="ChEBI" id="CHEBI:15378"/>
        <dbReference type="ChEBI" id="CHEBI:16567"/>
        <dbReference type="ChEBI" id="CHEBI:57959"/>
        <dbReference type="ChEBI" id="CHEBI:57972"/>
        <dbReference type="EC" id="3.7.1.3"/>
    </reaction>
</comment>
<comment type="catalytic activity">
    <reaction evidence="1">
        <text>3-hydroxy-L-kynurenine + H2O = 3-hydroxyanthranilate + L-alanine + H(+)</text>
        <dbReference type="Rhea" id="RHEA:25143"/>
        <dbReference type="ChEBI" id="CHEBI:15377"/>
        <dbReference type="ChEBI" id="CHEBI:15378"/>
        <dbReference type="ChEBI" id="CHEBI:36559"/>
        <dbReference type="ChEBI" id="CHEBI:57972"/>
        <dbReference type="ChEBI" id="CHEBI:58125"/>
        <dbReference type="EC" id="3.7.1.3"/>
    </reaction>
</comment>
<comment type="cofactor">
    <cofactor evidence="1">
        <name>pyridoxal 5'-phosphate</name>
        <dbReference type="ChEBI" id="CHEBI:597326"/>
    </cofactor>
</comment>
<comment type="pathway">
    <text evidence="1">Amino-acid degradation; L-kynurenine degradation; L-alanine and anthranilate from L-kynurenine: step 1/1.</text>
</comment>
<comment type="pathway">
    <text evidence="1">Cofactor biosynthesis; NAD(+) biosynthesis; quinolinate from L-kynurenine: step 2/3.</text>
</comment>
<comment type="subunit">
    <text evidence="1">Homodimer.</text>
</comment>
<comment type="similarity">
    <text evidence="1">Belongs to the kynureninase family.</text>
</comment>